<evidence type="ECO:0000256" key="1">
    <source>
        <dbReference type="SAM" id="MobiDB-lite"/>
    </source>
</evidence>
<evidence type="ECO:0000305" key="2"/>
<sequence length="108" mass="12106">MSEAKDNGSRDEVLVPHKNCRKNTTVPGKKGEEKSLAPVFAEKLISPSRRGAKLKDRESHQENEDRNSELDQDEEDKESFCRGFPMSGCELETSCCVCHSTALGERFC</sequence>
<feature type="chain" id="PRO_0000304783" description="Putative uncharacterized protein encoded by LINC00471">
    <location>
        <begin position="1"/>
        <end position="108"/>
    </location>
</feature>
<feature type="region of interest" description="Disordered" evidence="1">
    <location>
        <begin position="1"/>
        <end position="77"/>
    </location>
</feature>
<feature type="compositionally biased region" description="Basic and acidic residues" evidence="1">
    <location>
        <begin position="1"/>
        <end position="15"/>
    </location>
</feature>
<feature type="compositionally biased region" description="Basic and acidic residues" evidence="1">
    <location>
        <begin position="53"/>
        <end position="69"/>
    </location>
</feature>
<gene>
    <name type="primary">LINC00471</name>
    <name type="synonym">C2orf52</name>
</gene>
<protein>
    <recommendedName>
        <fullName>Putative uncharacterized protein encoded by LINC00471</fullName>
    </recommendedName>
</protein>
<reference key="1">
    <citation type="journal article" date="2005" name="Nature">
        <title>Generation and annotation of the DNA sequences of human chromosomes 2 and 4.</title>
        <authorList>
            <person name="Hillier L.W."/>
            <person name="Graves T.A."/>
            <person name="Fulton R.S."/>
            <person name="Fulton L.A."/>
            <person name="Pepin K.H."/>
            <person name="Minx P."/>
            <person name="Wagner-McPherson C."/>
            <person name="Layman D."/>
            <person name="Wylie K."/>
            <person name="Sekhon M."/>
            <person name="Becker M.C."/>
            <person name="Fewell G.A."/>
            <person name="Delehaunty K.D."/>
            <person name="Miner T.L."/>
            <person name="Nash W.E."/>
            <person name="Kremitzki C."/>
            <person name="Oddy L."/>
            <person name="Du H."/>
            <person name="Sun H."/>
            <person name="Bradshaw-Cordum H."/>
            <person name="Ali J."/>
            <person name="Carter J."/>
            <person name="Cordes M."/>
            <person name="Harris A."/>
            <person name="Isak A."/>
            <person name="van Brunt A."/>
            <person name="Nguyen C."/>
            <person name="Du F."/>
            <person name="Courtney L."/>
            <person name="Kalicki J."/>
            <person name="Ozersky P."/>
            <person name="Abbott S."/>
            <person name="Armstrong J."/>
            <person name="Belter E.A."/>
            <person name="Caruso L."/>
            <person name="Cedroni M."/>
            <person name="Cotton M."/>
            <person name="Davidson T."/>
            <person name="Desai A."/>
            <person name="Elliott G."/>
            <person name="Erb T."/>
            <person name="Fronick C."/>
            <person name="Gaige T."/>
            <person name="Haakenson W."/>
            <person name="Haglund K."/>
            <person name="Holmes A."/>
            <person name="Harkins R."/>
            <person name="Kim K."/>
            <person name="Kruchowski S.S."/>
            <person name="Strong C.M."/>
            <person name="Grewal N."/>
            <person name="Goyea E."/>
            <person name="Hou S."/>
            <person name="Levy A."/>
            <person name="Martinka S."/>
            <person name="Mead K."/>
            <person name="McLellan M.D."/>
            <person name="Meyer R."/>
            <person name="Randall-Maher J."/>
            <person name="Tomlinson C."/>
            <person name="Dauphin-Kohlberg S."/>
            <person name="Kozlowicz-Reilly A."/>
            <person name="Shah N."/>
            <person name="Swearengen-Shahid S."/>
            <person name="Snider J."/>
            <person name="Strong J.T."/>
            <person name="Thompson J."/>
            <person name="Yoakum M."/>
            <person name="Leonard S."/>
            <person name="Pearman C."/>
            <person name="Trani L."/>
            <person name="Radionenko M."/>
            <person name="Waligorski J.E."/>
            <person name="Wang C."/>
            <person name="Rock S.M."/>
            <person name="Tin-Wollam A.-M."/>
            <person name="Maupin R."/>
            <person name="Latreille P."/>
            <person name="Wendl M.C."/>
            <person name="Yang S.-P."/>
            <person name="Pohl C."/>
            <person name="Wallis J.W."/>
            <person name="Spieth J."/>
            <person name="Bieri T.A."/>
            <person name="Berkowicz N."/>
            <person name="Nelson J.O."/>
            <person name="Osborne J."/>
            <person name="Ding L."/>
            <person name="Meyer R."/>
            <person name="Sabo A."/>
            <person name="Shotland Y."/>
            <person name="Sinha P."/>
            <person name="Wohldmann P.E."/>
            <person name="Cook L.L."/>
            <person name="Hickenbotham M.T."/>
            <person name="Eldred J."/>
            <person name="Williams D."/>
            <person name="Jones T.A."/>
            <person name="She X."/>
            <person name="Ciccarelli F.D."/>
            <person name="Izaurralde E."/>
            <person name="Taylor J."/>
            <person name="Schmutz J."/>
            <person name="Myers R.M."/>
            <person name="Cox D.R."/>
            <person name="Huang X."/>
            <person name="McPherson J.D."/>
            <person name="Mardis E.R."/>
            <person name="Clifton S.W."/>
            <person name="Warren W.C."/>
            <person name="Chinwalla A.T."/>
            <person name="Eddy S.R."/>
            <person name="Marra M.A."/>
            <person name="Ovcharenko I."/>
            <person name="Furey T.S."/>
            <person name="Miller W."/>
            <person name="Eichler E.E."/>
            <person name="Bork P."/>
            <person name="Suyama M."/>
            <person name="Torrents D."/>
            <person name="Waterston R.H."/>
            <person name="Wilson R.K."/>
        </authorList>
    </citation>
    <scope>NUCLEOTIDE SEQUENCE [LARGE SCALE GENOMIC DNA]</scope>
</reference>
<reference key="2">
    <citation type="submission" date="2005-07" db="EMBL/GenBank/DDBJ databases">
        <authorList>
            <person name="Mural R.J."/>
            <person name="Istrail S."/>
            <person name="Sutton G.G."/>
            <person name="Florea L."/>
            <person name="Halpern A.L."/>
            <person name="Mobarry C.M."/>
            <person name="Lippert R."/>
            <person name="Walenz B."/>
            <person name="Shatkay H."/>
            <person name="Dew I."/>
            <person name="Miller J.R."/>
            <person name="Flanigan M.J."/>
            <person name="Edwards N.J."/>
            <person name="Bolanos R."/>
            <person name="Fasulo D."/>
            <person name="Halldorsson B.V."/>
            <person name="Hannenhalli S."/>
            <person name="Turner R."/>
            <person name="Yooseph S."/>
            <person name="Lu F."/>
            <person name="Nusskern D.R."/>
            <person name="Shue B.C."/>
            <person name="Zheng X.H."/>
            <person name="Zhong F."/>
            <person name="Delcher A.L."/>
            <person name="Huson D.H."/>
            <person name="Kravitz S.A."/>
            <person name="Mouchard L."/>
            <person name="Reinert K."/>
            <person name="Remington K.A."/>
            <person name="Clark A.G."/>
            <person name="Waterman M.S."/>
            <person name="Eichler E.E."/>
            <person name="Adams M.D."/>
            <person name="Hunkapiller M.W."/>
            <person name="Myers E.W."/>
            <person name="Venter J.C."/>
        </authorList>
    </citation>
    <scope>NUCLEOTIDE SEQUENCE [LARGE SCALE GENOMIC DNA]</scope>
</reference>
<reference key="3">
    <citation type="journal article" date="2004" name="Genome Res.">
        <title>The status, quality, and expansion of the NIH full-length cDNA project: the Mammalian Gene Collection (MGC).</title>
        <authorList>
            <consortium name="The MGC Project Team"/>
        </authorList>
    </citation>
    <scope>NUCLEOTIDE SEQUENCE [LARGE SCALE MRNA]</scope>
    <source>
        <tissue>Brain</tissue>
    </source>
</reference>
<proteinExistence type="uncertain"/>
<comment type="caution">
    <text evidence="2">Product of a dubious CDS prediction. May be a non-coding RNA.</text>
</comment>
<keyword id="KW-1185">Reference proteome</keyword>
<dbReference type="EMBL" id="AC017104">
    <property type="protein sequence ID" value="AAY24248.1"/>
    <property type="molecule type" value="Genomic_DNA"/>
</dbReference>
<dbReference type="EMBL" id="CH471063">
    <property type="protein sequence ID" value="EAW70965.1"/>
    <property type="molecule type" value="Genomic_DNA"/>
</dbReference>
<dbReference type="EMBL" id="BC033054">
    <property type="status" value="NOT_ANNOTATED_CDS"/>
    <property type="molecule type" value="mRNA"/>
</dbReference>
<dbReference type="IntAct" id="Q8N535">
    <property type="interactions" value="1"/>
</dbReference>
<dbReference type="BioMuta" id="HGNC:28668"/>
<dbReference type="DMDM" id="74728937"/>
<dbReference type="ProteomicsDB" id="71997"/>
<dbReference type="AGR" id="HGNC:28668"/>
<dbReference type="GeneCards" id="LINC00471"/>
<dbReference type="HGNC" id="HGNC:28668">
    <property type="gene designation" value="LINC00471"/>
</dbReference>
<dbReference type="neXtProt" id="NX_Q8N535"/>
<dbReference type="InParanoid" id="Q8N535"/>
<dbReference type="PAN-GO" id="Q8N535">
    <property type="GO annotations" value="0 GO annotations based on evolutionary models"/>
</dbReference>
<dbReference type="PathwayCommons" id="Q8N535"/>
<dbReference type="Pharos" id="Q8N535">
    <property type="development level" value="Tdark"/>
</dbReference>
<dbReference type="Proteomes" id="UP000005640">
    <property type="component" value="Unplaced"/>
</dbReference>
<dbReference type="RNAct" id="Q8N535">
    <property type="molecule type" value="protein"/>
</dbReference>
<name>CB052_HUMAN</name>
<organism>
    <name type="scientific">Homo sapiens</name>
    <name type="common">Human</name>
    <dbReference type="NCBI Taxonomy" id="9606"/>
    <lineage>
        <taxon>Eukaryota</taxon>
        <taxon>Metazoa</taxon>
        <taxon>Chordata</taxon>
        <taxon>Craniata</taxon>
        <taxon>Vertebrata</taxon>
        <taxon>Euteleostomi</taxon>
        <taxon>Mammalia</taxon>
        <taxon>Eutheria</taxon>
        <taxon>Euarchontoglires</taxon>
        <taxon>Primates</taxon>
        <taxon>Haplorrhini</taxon>
        <taxon>Catarrhini</taxon>
        <taxon>Hominidae</taxon>
        <taxon>Homo</taxon>
    </lineage>
</organism>
<accession>Q8N535</accession>